<comment type="function">
    <text>Molecular chaperone; binds unfolded polypeptides in vitro, and has a weak ATPase activity.</text>
</comment>
<comment type="subunit">
    <text evidence="1">Forms a Heterooligomeric complex of two stacked eight-membered rings.</text>
</comment>
<comment type="similarity">
    <text evidence="2">Belongs to the TCP-1 chaperonin family.</text>
</comment>
<sequence length="546" mass="59158">MAQLAGQPVVILPEGTQRYVGRDAQRLNILAARIIAETVRTTLGPKGMDKMLVDSLGDIVITNDGATILDEMDIQHPAAKMMVEVAKTQDKEAGDGTTTAVVIAGELLRKAEELLDQNIHPSIIIKGYALAAEKAQEILDEIAKDVDVEDREILKKAAVTSITGKAAEEEREYLAEIAVEAVKQVAEKVGETYKVDLDNIKFEKKEGGSVKDTQLIKGVVIDKEVVHPGMPKRVEGAKIALINEALEVKETETDAEIRITSPEQLQAFLEQEEKMLREMVDKIKEVGANVVFVQKGIDDLAQHYLAKYGIMAVRRVKKSDMEKLAKATGAKIVTNVRDLTPEDLGEAELVEQRKVAGENMIFVEGCKNPKAVTILIRGGTEHVVDEVERALEDAVKVVKDIVEDGKIVAAGGAPEIELAIRLDEYAKEVGGKEQLAIEAFAEALKVIPRTLAENAGLDPIETLVKVIAAHKEKGPTIGVDVFEGEPADMLERGVIAPVRVPKQAIKSASEAAIMILRIDDVIAASKLEKDKEGGKGGSEDFGSDLD</sequence>
<feature type="chain" id="PRO_0000128411" description="Thermosome subunit beta">
    <location>
        <begin position="1"/>
        <end position="546"/>
    </location>
</feature>
<proteinExistence type="inferred from homology"/>
<gene>
    <name type="primary">thsB</name>
    <name type="synonym">cpkB</name>
    <name type="synonym">ths</name>
    <name type="ordered locus">TK2303</name>
</gene>
<accession>Q52500</accession>
<name>THSB_THEKO</name>
<evidence type="ECO:0000250" key="1"/>
<evidence type="ECO:0000305" key="2"/>
<protein>
    <recommendedName>
        <fullName>Thermosome subunit beta</fullName>
    </recommendedName>
    <alternativeName>
        <fullName>Chaperonin subunit beta</fullName>
    </alternativeName>
    <alternativeName>
        <fullName>Thermosome subunit 2</fullName>
    </alternativeName>
</protein>
<dbReference type="EMBL" id="D29672">
    <property type="protein sequence ID" value="BAA06143.1"/>
    <property type="molecule type" value="Genomic_DNA"/>
</dbReference>
<dbReference type="EMBL" id="AP006878">
    <property type="protein sequence ID" value="BAD86492.1"/>
    <property type="molecule type" value="Genomic_DNA"/>
</dbReference>
<dbReference type="PIR" id="S61294">
    <property type="entry name" value="S61294"/>
</dbReference>
<dbReference type="RefSeq" id="WP_011251253.1">
    <property type="nucleotide sequence ID" value="NC_006624.1"/>
</dbReference>
<dbReference type="SMR" id="Q52500"/>
<dbReference type="FunCoup" id="Q52500">
    <property type="interactions" value="192"/>
</dbReference>
<dbReference type="IntAct" id="Q52500">
    <property type="interactions" value="1"/>
</dbReference>
<dbReference type="MINT" id="Q52500"/>
<dbReference type="STRING" id="69014.TK2303"/>
<dbReference type="EnsemblBacteria" id="BAD86492">
    <property type="protein sequence ID" value="BAD86492"/>
    <property type="gene ID" value="TK2303"/>
</dbReference>
<dbReference type="GeneID" id="78448848"/>
<dbReference type="KEGG" id="tko:TK2303"/>
<dbReference type="PATRIC" id="fig|69014.16.peg.2258"/>
<dbReference type="eggNOG" id="arCOG01257">
    <property type="taxonomic scope" value="Archaea"/>
</dbReference>
<dbReference type="HOGENOM" id="CLU_008891_7_3_2"/>
<dbReference type="InParanoid" id="Q52500"/>
<dbReference type="OrthoDB" id="9362at2157"/>
<dbReference type="PhylomeDB" id="Q52500"/>
<dbReference type="BRENDA" id="3.6.4.B10">
    <property type="organism ID" value="5246"/>
</dbReference>
<dbReference type="Proteomes" id="UP000000536">
    <property type="component" value="Chromosome"/>
</dbReference>
<dbReference type="GO" id="GO:0005524">
    <property type="term" value="F:ATP binding"/>
    <property type="evidence" value="ECO:0007669"/>
    <property type="project" value="UniProtKB-KW"/>
</dbReference>
<dbReference type="GO" id="GO:0016887">
    <property type="term" value="F:ATP hydrolysis activity"/>
    <property type="evidence" value="ECO:0007669"/>
    <property type="project" value="InterPro"/>
</dbReference>
<dbReference type="GO" id="GO:0140662">
    <property type="term" value="F:ATP-dependent protein folding chaperone"/>
    <property type="evidence" value="ECO:0007669"/>
    <property type="project" value="InterPro"/>
</dbReference>
<dbReference type="GO" id="GO:0051082">
    <property type="term" value="F:unfolded protein binding"/>
    <property type="evidence" value="ECO:0000318"/>
    <property type="project" value="GO_Central"/>
</dbReference>
<dbReference type="GO" id="GO:0006457">
    <property type="term" value="P:protein folding"/>
    <property type="evidence" value="ECO:0000318"/>
    <property type="project" value="GO_Central"/>
</dbReference>
<dbReference type="CDD" id="cd03343">
    <property type="entry name" value="cpn60"/>
    <property type="match status" value="1"/>
</dbReference>
<dbReference type="Gene3D" id="3.50.7.10">
    <property type="entry name" value="GroEL"/>
    <property type="match status" value="1"/>
</dbReference>
<dbReference type="Gene3D" id="1.10.560.10">
    <property type="entry name" value="GroEL-like equatorial domain"/>
    <property type="match status" value="1"/>
</dbReference>
<dbReference type="Gene3D" id="3.30.260.10">
    <property type="entry name" value="TCP-1-like chaperonin intermediate domain"/>
    <property type="match status" value="1"/>
</dbReference>
<dbReference type="InterPro" id="IPR017998">
    <property type="entry name" value="Chaperone_TCP-1"/>
</dbReference>
<dbReference type="InterPro" id="IPR002194">
    <property type="entry name" value="Chaperonin_TCP-1_CS"/>
</dbReference>
<dbReference type="InterPro" id="IPR002423">
    <property type="entry name" value="Cpn60/GroEL/TCP-1"/>
</dbReference>
<dbReference type="InterPro" id="IPR027409">
    <property type="entry name" value="GroEL-like_apical_dom_sf"/>
</dbReference>
<dbReference type="InterPro" id="IPR027413">
    <property type="entry name" value="GROEL-like_equatorial_sf"/>
</dbReference>
<dbReference type="InterPro" id="IPR027410">
    <property type="entry name" value="TCP-1-like_intermed_sf"/>
</dbReference>
<dbReference type="InterPro" id="IPR053374">
    <property type="entry name" value="TCP-1_chaperonin"/>
</dbReference>
<dbReference type="InterPro" id="IPR054827">
    <property type="entry name" value="thermosome_alpha"/>
</dbReference>
<dbReference type="InterPro" id="IPR012714">
    <property type="entry name" value="Thermosome_arc"/>
</dbReference>
<dbReference type="NCBIfam" id="NF041082">
    <property type="entry name" value="thermosome_alpha"/>
    <property type="match status" value="1"/>
</dbReference>
<dbReference type="NCBIfam" id="TIGR02339">
    <property type="entry name" value="thermosome_arch"/>
    <property type="match status" value="1"/>
</dbReference>
<dbReference type="NCBIfam" id="NF041083">
    <property type="entry name" value="thermosome_beta"/>
    <property type="match status" value="1"/>
</dbReference>
<dbReference type="PANTHER" id="PTHR11353">
    <property type="entry name" value="CHAPERONIN"/>
    <property type="match status" value="1"/>
</dbReference>
<dbReference type="Pfam" id="PF00118">
    <property type="entry name" value="Cpn60_TCP1"/>
    <property type="match status" value="1"/>
</dbReference>
<dbReference type="PRINTS" id="PR00304">
    <property type="entry name" value="TCOMPLEXTCP1"/>
</dbReference>
<dbReference type="SUPFAM" id="SSF52029">
    <property type="entry name" value="GroEL apical domain-like"/>
    <property type="match status" value="1"/>
</dbReference>
<dbReference type="SUPFAM" id="SSF48592">
    <property type="entry name" value="GroEL equatorial domain-like"/>
    <property type="match status" value="1"/>
</dbReference>
<dbReference type="SUPFAM" id="SSF54849">
    <property type="entry name" value="GroEL-intermediate domain like"/>
    <property type="match status" value="1"/>
</dbReference>
<dbReference type="PROSITE" id="PS00750">
    <property type="entry name" value="TCP1_1"/>
    <property type="match status" value="1"/>
</dbReference>
<dbReference type="PROSITE" id="PS00751">
    <property type="entry name" value="TCP1_2"/>
    <property type="match status" value="1"/>
</dbReference>
<dbReference type="PROSITE" id="PS00995">
    <property type="entry name" value="TCP1_3"/>
    <property type="match status" value="1"/>
</dbReference>
<keyword id="KW-0067">ATP-binding</keyword>
<keyword id="KW-0143">Chaperone</keyword>
<keyword id="KW-0547">Nucleotide-binding</keyword>
<keyword id="KW-1185">Reference proteome</keyword>
<reference key="1">
    <citation type="journal article" date="1997" name="Appl. Environ. Microbiol.">
        <title>In vitro stabilization and in vivo solubilization of foreign proteins by the beta subunit of a chaperonin from the hyperthermophilic archaeon Pyrococcus sp. strain KOD1.</title>
        <authorList>
            <person name="Yan Z."/>
            <person name="Fujiwara S."/>
            <person name="Kohda K."/>
            <person name="Takagi M."/>
            <person name="Imanaka T."/>
        </authorList>
    </citation>
    <scope>NUCLEOTIDE SEQUENCE [GENOMIC DNA]</scope>
    <source>
        <strain>ATCC BAA-918 / JCM 12380 / KOD1</strain>
    </source>
</reference>
<reference key="2">
    <citation type="journal article" date="2005" name="Genome Res.">
        <title>Complete genome sequence of the hyperthermophilic archaeon Thermococcus kodakaraensis KOD1 and comparison with Pyrococcus genomes.</title>
        <authorList>
            <person name="Fukui T."/>
            <person name="Atomi H."/>
            <person name="Kanai T."/>
            <person name="Matsumi R."/>
            <person name="Fujiwara S."/>
            <person name="Imanaka T."/>
        </authorList>
    </citation>
    <scope>NUCLEOTIDE SEQUENCE [LARGE SCALE GENOMIC DNA]</scope>
    <source>
        <strain>ATCC BAA-918 / JCM 12380 / KOD1</strain>
    </source>
</reference>
<organism>
    <name type="scientific">Thermococcus kodakarensis (strain ATCC BAA-918 / JCM 12380 / KOD1)</name>
    <name type="common">Pyrococcus kodakaraensis (strain KOD1)</name>
    <dbReference type="NCBI Taxonomy" id="69014"/>
    <lineage>
        <taxon>Archaea</taxon>
        <taxon>Methanobacteriati</taxon>
        <taxon>Methanobacteriota</taxon>
        <taxon>Thermococci</taxon>
        <taxon>Thermococcales</taxon>
        <taxon>Thermococcaceae</taxon>
        <taxon>Thermococcus</taxon>
    </lineage>
</organism>